<name>HSP90_THEPA</name>
<keyword id="KW-0067">ATP-binding</keyword>
<keyword id="KW-0143">Chaperone</keyword>
<keyword id="KW-0963">Cytoplasm</keyword>
<keyword id="KW-0547">Nucleotide-binding</keyword>
<keyword id="KW-1185">Reference proteome</keyword>
<keyword id="KW-0346">Stress response</keyword>
<evidence type="ECO:0000250" key="1"/>
<evidence type="ECO:0000256" key="2">
    <source>
        <dbReference type="SAM" id="MobiDB-lite"/>
    </source>
</evidence>
<evidence type="ECO:0000305" key="3"/>
<proteinExistence type="evidence at transcript level"/>
<feature type="chain" id="PRO_0000062943" description="Heat shock protein 90">
    <location>
        <begin position="1"/>
        <end position="721"/>
    </location>
</feature>
<feature type="region of interest" description="Disordered" evidence="2">
    <location>
        <begin position="219"/>
        <end position="273"/>
    </location>
</feature>
<feature type="region of interest" description="Disordered" evidence="2">
    <location>
        <begin position="697"/>
        <end position="721"/>
    </location>
</feature>
<feature type="short sequence motif" description="TPR repeat-binding">
    <location>
        <begin position="717"/>
        <end position="721"/>
    </location>
</feature>
<feature type="compositionally biased region" description="Acidic residues" evidence="2">
    <location>
        <begin position="223"/>
        <end position="232"/>
    </location>
</feature>
<feature type="compositionally biased region" description="Basic and acidic residues" evidence="2">
    <location>
        <begin position="233"/>
        <end position="257"/>
    </location>
</feature>
<feature type="binding site" evidence="1">
    <location>
        <position position="44"/>
    </location>
    <ligand>
        <name>ATP</name>
        <dbReference type="ChEBI" id="CHEBI:30616"/>
    </ligand>
</feature>
<feature type="binding site" evidence="1">
    <location>
        <position position="86"/>
    </location>
    <ligand>
        <name>ATP</name>
        <dbReference type="ChEBI" id="CHEBI:30616"/>
    </ligand>
</feature>
<feature type="binding site" evidence="1">
    <location>
        <position position="105"/>
    </location>
    <ligand>
        <name>ATP</name>
        <dbReference type="ChEBI" id="CHEBI:30616"/>
    </ligand>
</feature>
<feature type="binding site" evidence="1">
    <location>
        <position position="131"/>
    </location>
    <ligand>
        <name>ATP</name>
        <dbReference type="ChEBI" id="CHEBI:30616"/>
    </ligand>
</feature>
<feature type="binding site" evidence="1">
    <location>
        <position position="395"/>
    </location>
    <ligand>
        <name>ATP</name>
        <dbReference type="ChEBI" id="CHEBI:30616"/>
    </ligand>
</feature>
<feature type="sequence conflict" description="In Ref. 1; AAA30132." evidence="3" ref="1">
    <original>A</original>
    <variation>S</variation>
    <location>
        <position position="508"/>
    </location>
</feature>
<gene>
    <name type="ordered locus">TP02_0244</name>
</gene>
<organism>
    <name type="scientific">Theileria parva</name>
    <name type="common">East coast fever infection agent</name>
    <dbReference type="NCBI Taxonomy" id="5875"/>
    <lineage>
        <taxon>Eukaryota</taxon>
        <taxon>Sar</taxon>
        <taxon>Alveolata</taxon>
        <taxon>Apicomplexa</taxon>
        <taxon>Aconoidasida</taxon>
        <taxon>Piroplasmida</taxon>
        <taxon>Theileriidae</taxon>
        <taxon>Theileria</taxon>
    </lineage>
</organism>
<dbReference type="EMBL" id="M57386">
    <property type="protein sequence ID" value="AAA30132.1"/>
    <property type="molecule type" value="mRNA"/>
</dbReference>
<dbReference type="EMBL" id="AAGK01000002">
    <property type="protein sequence ID" value="EAN32527.1"/>
    <property type="molecule type" value="Genomic_DNA"/>
</dbReference>
<dbReference type="RefSeq" id="XP_764810.1">
    <property type="nucleotide sequence ID" value="XM_759717.1"/>
</dbReference>
<dbReference type="SMR" id="P24724"/>
<dbReference type="FunCoup" id="P24724">
    <property type="interactions" value="258"/>
</dbReference>
<dbReference type="STRING" id="5875.P24724"/>
<dbReference type="EnsemblProtists" id="EAN32527">
    <property type="protein sequence ID" value="EAN32527"/>
    <property type="gene ID" value="TP02_0244"/>
</dbReference>
<dbReference type="GeneID" id="3501902"/>
<dbReference type="KEGG" id="tpv:TP02_0244"/>
<dbReference type="VEuPathDB" id="PiroplasmaDB:TpMuguga_02g00244"/>
<dbReference type="eggNOG" id="KOG0019">
    <property type="taxonomic scope" value="Eukaryota"/>
</dbReference>
<dbReference type="InParanoid" id="P24724"/>
<dbReference type="OMA" id="MRRMKEM"/>
<dbReference type="Proteomes" id="UP000001949">
    <property type="component" value="Unassembled WGS sequence"/>
</dbReference>
<dbReference type="GO" id="GO:0005737">
    <property type="term" value="C:cytoplasm"/>
    <property type="evidence" value="ECO:0007669"/>
    <property type="project" value="UniProtKB-SubCell"/>
</dbReference>
<dbReference type="GO" id="GO:0005524">
    <property type="term" value="F:ATP binding"/>
    <property type="evidence" value="ECO:0007669"/>
    <property type="project" value="UniProtKB-KW"/>
</dbReference>
<dbReference type="GO" id="GO:0016887">
    <property type="term" value="F:ATP hydrolysis activity"/>
    <property type="evidence" value="ECO:0007669"/>
    <property type="project" value="InterPro"/>
</dbReference>
<dbReference type="GO" id="GO:0140662">
    <property type="term" value="F:ATP-dependent protein folding chaperone"/>
    <property type="evidence" value="ECO:0007669"/>
    <property type="project" value="InterPro"/>
</dbReference>
<dbReference type="GO" id="GO:0051082">
    <property type="term" value="F:unfolded protein binding"/>
    <property type="evidence" value="ECO:0007669"/>
    <property type="project" value="InterPro"/>
</dbReference>
<dbReference type="CDD" id="cd16927">
    <property type="entry name" value="HATPase_Hsp90-like"/>
    <property type="match status" value="1"/>
</dbReference>
<dbReference type="FunFam" id="1.20.120.790:FF:000001">
    <property type="entry name" value="Heat shock protein 90 alpha"/>
    <property type="match status" value="1"/>
</dbReference>
<dbReference type="FunFam" id="3.30.230.80:FF:000001">
    <property type="entry name" value="Heat shock protein 90 alpha"/>
    <property type="match status" value="1"/>
</dbReference>
<dbReference type="FunFam" id="3.40.50.11260:FF:000001">
    <property type="entry name" value="Heat shock protein 90 alpha"/>
    <property type="match status" value="1"/>
</dbReference>
<dbReference type="FunFam" id="3.30.565.10:FF:000001">
    <property type="entry name" value="Heat shock protein HSP 90-alpha"/>
    <property type="match status" value="1"/>
</dbReference>
<dbReference type="Gene3D" id="3.30.230.80">
    <property type="match status" value="1"/>
</dbReference>
<dbReference type="Gene3D" id="3.40.50.11260">
    <property type="match status" value="1"/>
</dbReference>
<dbReference type="Gene3D" id="1.20.120.790">
    <property type="entry name" value="Heat shock protein 90, C-terminal domain"/>
    <property type="match status" value="1"/>
</dbReference>
<dbReference type="Gene3D" id="3.30.565.10">
    <property type="entry name" value="Histidine kinase-like ATPase, C-terminal domain"/>
    <property type="match status" value="1"/>
</dbReference>
<dbReference type="HAMAP" id="MF_00505">
    <property type="entry name" value="HSP90"/>
    <property type="match status" value="1"/>
</dbReference>
<dbReference type="InterPro" id="IPR036890">
    <property type="entry name" value="HATPase_C_sf"/>
</dbReference>
<dbReference type="InterPro" id="IPR019805">
    <property type="entry name" value="Heat_shock_protein_90_CS"/>
</dbReference>
<dbReference type="InterPro" id="IPR037196">
    <property type="entry name" value="HSP90_C"/>
</dbReference>
<dbReference type="InterPro" id="IPR001404">
    <property type="entry name" value="Hsp90_fam"/>
</dbReference>
<dbReference type="InterPro" id="IPR020575">
    <property type="entry name" value="Hsp90_N"/>
</dbReference>
<dbReference type="InterPro" id="IPR020568">
    <property type="entry name" value="Ribosomal_Su5_D2-typ_SF"/>
</dbReference>
<dbReference type="NCBIfam" id="NF003555">
    <property type="entry name" value="PRK05218.1"/>
    <property type="match status" value="1"/>
</dbReference>
<dbReference type="PANTHER" id="PTHR11528">
    <property type="entry name" value="HEAT SHOCK PROTEIN 90 FAMILY MEMBER"/>
    <property type="match status" value="1"/>
</dbReference>
<dbReference type="Pfam" id="PF13589">
    <property type="entry name" value="HATPase_c_3"/>
    <property type="match status" value="1"/>
</dbReference>
<dbReference type="Pfam" id="PF00183">
    <property type="entry name" value="HSP90"/>
    <property type="match status" value="1"/>
</dbReference>
<dbReference type="PIRSF" id="PIRSF002583">
    <property type="entry name" value="Hsp90"/>
    <property type="match status" value="1"/>
</dbReference>
<dbReference type="PRINTS" id="PR00775">
    <property type="entry name" value="HEATSHOCK90"/>
</dbReference>
<dbReference type="SMART" id="SM00387">
    <property type="entry name" value="HATPase_c"/>
    <property type="match status" value="1"/>
</dbReference>
<dbReference type="SUPFAM" id="SSF55874">
    <property type="entry name" value="ATPase domain of HSP90 chaperone/DNA topoisomerase II/histidine kinase"/>
    <property type="match status" value="1"/>
</dbReference>
<dbReference type="SUPFAM" id="SSF110942">
    <property type="entry name" value="HSP90 C-terminal domain"/>
    <property type="match status" value="1"/>
</dbReference>
<dbReference type="SUPFAM" id="SSF54211">
    <property type="entry name" value="Ribosomal protein S5 domain 2-like"/>
    <property type="match status" value="1"/>
</dbReference>
<dbReference type="PROSITE" id="PS00298">
    <property type="entry name" value="HSP90"/>
    <property type="match status" value="1"/>
</dbReference>
<protein>
    <recommendedName>
        <fullName>Heat shock protein 90</fullName>
        <shortName>HSP90</shortName>
    </recommendedName>
</protein>
<reference key="1">
    <citation type="submission" date="1991-02" db="EMBL/GenBank/DDBJ databases">
        <title>Sequence and expression of a 90 kilodalton heat-shock protein.</title>
        <authorList>
            <person name="Gerhards J."/>
            <person name="Morzarin S.P."/>
            <person name="Musoke A.J."/>
            <person name="Lipp J."/>
            <person name="Williams R.O."/>
        </authorList>
    </citation>
    <scope>NUCLEOTIDE SEQUENCE [MRNA]</scope>
</reference>
<reference key="2">
    <citation type="journal article" date="2005" name="Science">
        <title>Genome sequence of Theileria parva, a bovine pathogen that transforms lymphocytes.</title>
        <authorList>
            <person name="Gardner M.J."/>
            <person name="Bishop R."/>
            <person name="Shah T."/>
            <person name="de Villiers E.P."/>
            <person name="Carlton J.M."/>
            <person name="Hall N."/>
            <person name="Ren Q."/>
            <person name="Paulsen I.T."/>
            <person name="Pain A."/>
            <person name="Berriman M."/>
            <person name="Wilson R.J.M."/>
            <person name="Sato S."/>
            <person name="Ralph S.A."/>
            <person name="Mann D.J."/>
            <person name="Xiong Z."/>
            <person name="Shallom S.J."/>
            <person name="Weidman J."/>
            <person name="Jiang L."/>
            <person name="Lynn J."/>
            <person name="Weaver B."/>
            <person name="Shoaibi A."/>
            <person name="Domingo A.R."/>
            <person name="Wasawo D."/>
            <person name="Crabtree J."/>
            <person name="Wortman J.R."/>
            <person name="Haas B."/>
            <person name="Angiuoli S.V."/>
            <person name="Creasy T.H."/>
            <person name="Lu C."/>
            <person name="Suh B."/>
            <person name="Silva J.C."/>
            <person name="Utterback T.R."/>
            <person name="Feldblyum T.V."/>
            <person name="Pertea M."/>
            <person name="Allen J."/>
            <person name="Nierman W.C."/>
            <person name="Taracha E.L.N."/>
            <person name="Salzberg S.L."/>
            <person name="White O.R."/>
            <person name="Fitzhugh H.A."/>
            <person name="Morzaria S."/>
            <person name="Venter J.C."/>
            <person name="Fraser C.M."/>
            <person name="Nene V."/>
        </authorList>
    </citation>
    <scope>NUCLEOTIDE SEQUENCE [LARGE SCALE GENOMIC DNA]</scope>
    <source>
        <strain>Muguga</strain>
    </source>
</reference>
<comment type="function">
    <text evidence="1">Molecular chaperone that promotes the maturation, structural maintenance and proper regulation of specific target proteins involved for instance in cell cycle control and signal transduction. Undergoes a functional cycle that is linked to its ATPase activity. This cycle probably induces conformational changes in the client proteins, thereby causing their activation. Interacts dynamically with various co-chaperones that modulate its substrate recognition, ATPase cycle and chaperone function (By similarity).</text>
</comment>
<comment type="subunit">
    <text evidence="1">Homodimer.</text>
</comment>
<comment type="subcellular location">
    <subcellularLocation>
        <location evidence="1">Cytoplasm</location>
    </subcellularLocation>
</comment>
<comment type="domain">
    <text evidence="1">The TPR repeat-binding motif mediates interaction with TPR repeat-containing proteins.</text>
</comment>
<comment type="similarity">
    <text evidence="3">Belongs to the heat shock protein 90 family.</text>
</comment>
<accession>P24724</accession>
<accession>Q4N5P6</accession>
<sequence>MTSKDETPDQEVYAFNADISQLLSLIINAFYSNKEIFLRELISNASDALEKIRYEAIKDPKQIEDQPDYYIRLYADKNNNTLTIEDSGIGMTKADLVNNLGTIAKSGTRAFMEALQAGSDMSMIGQFGVGFYSAYLVADKVTVVSKNNADDQYVWESTASGHFTVKKDDSHEPLKRGTRLILHLKEDQTEYLEERRLKELVKKHSEFISFPISLSVEKTQETEVTDDEAELDEDKKPEEEKPKDDKVEDVTDEKVTDVTDEEEKKEEKKKKKRKVTNVTREWEMLNKQKPIWMRLPSEVTNEEYAAFYKNLTNDWEDHLAVKHFSVEGQLEFKALLFVPRRAPFDMFESRKKKNNIKLYVRRVFIMDDCEELIPEWLSFVKGVVDSEDLPLNISRETLQQNKILKVIRKNLVKKCLELFNELTEKKEDFKKFYEQFSKNLKLGIHEDNANRSKIAELLRFETTKSGDELVSLKEYVDRMKSDQKYVYYITGESKQSVASSPFLETLRARDYEVLYMTDPIDEYAVQQIKEFEGKKLKCCTKEGLDLDEGEDEKKSFEALKEEMEPLCKHIKEVLHDKVEKVVCGTRFTDSPCALVTSEFGWSANMERIMKAQALRDSSITSYMLSKKIMEINPRHSIMKELKTRAANDKTDKTVKDLVWLLYDTALLTSGFNLDEPTQFGNRIYRMIKLGLSLDDEEHVEEDSSMPPLDEPVVDSKMEEVD</sequence>